<keyword id="KW-1185">Reference proteome</keyword>
<organismHost>
    <name type="scientific">Mycobacterium</name>
    <dbReference type="NCBI Taxonomy" id="1763"/>
</organismHost>
<feature type="chain" id="PRO_0000164698" description="Gene 2 protein">
    <location>
        <begin position="1"/>
        <end position="259"/>
    </location>
</feature>
<organism>
    <name type="scientific">Mycobacterium phage D29</name>
    <name type="common">Mycobacteriophage D29</name>
    <dbReference type="NCBI Taxonomy" id="28369"/>
    <lineage>
        <taxon>Viruses</taxon>
        <taxon>Duplodnaviria</taxon>
        <taxon>Heunggongvirae</taxon>
        <taxon>Uroviricota</taxon>
        <taxon>Caudoviricetes</taxon>
        <taxon>Fromanvirus</taxon>
    </lineage>
</organism>
<name>VG02_BPMD2</name>
<accession>O64198</accession>
<reference key="1">
    <citation type="journal article" date="1998" name="J. Mol. Biol.">
        <title>Genome structure of mycobacteriophage D29: implications for phage evolution.</title>
        <authorList>
            <person name="Ford M.E."/>
            <person name="Sarkis G.J."/>
            <person name="Belanger A.E."/>
            <person name="Hendrix R.W."/>
            <person name="Hatfull G.F."/>
        </authorList>
    </citation>
    <scope>NUCLEOTIDE SEQUENCE [LARGE SCALE GENOMIC DNA]</scope>
</reference>
<gene>
    <name type="primary">2</name>
</gene>
<dbReference type="EMBL" id="AF022214">
    <property type="protein sequence ID" value="AAC18445.1"/>
    <property type="molecule type" value="Genomic_DNA"/>
</dbReference>
<dbReference type="PIR" id="B72800">
    <property type="entry name" value="B72800"/>
</dbReference>
<dbReference type="RefSeq" id="NP_046820.1">
    <property type="nucleotide sequence ID" value="NC_001900.1"/>
</dbReference>
<dbReference type="SMR" id="O64198"/>
<dbReference type="GeneID" id="1261608"/>
<dbReference type="KEGG" id="vg:1261608"/>
<dbReference type="OrthoDB" id="5733at10239"/>
<dbReference type="Proteomes" id="UP000002131">
    <property type="component" value="Segment"/>
</dbReference>
<proteinExistence type="predicted"/>
<sequence length="259" mass="28785">MDPAQKRAAFNALAVAARDQHSPSDAKRIAKRDQMLGYVRGPWEQLEDDDSTRYDTLKQAMDDAMSKILSQAQVVHRTKHLDKLLDSGRISSLFEVGFSAGGDTPGQRALYEEAWFGKGHVPPVYSALEFDGVKPKGMSMYGSTKLYLKPEVRDRVTVTIGDSLMSSDSVFPGKPGDGLGLRANPNAIKNLVDPNKSREENMQAIYESFKKYAESNFIESQIHDGVILEDIEKVVFTQPPSSFLTDKLDKLGIPWEVES</sequence>
<protein>
    <recommendedName>
        <fullName>Gene 2 protein</fullName>
    </recommendedName>
    <alternativeName>
        <fullName>Gp2</fullName>
    </alternativeName>
</protein>